<organism>
    <name type="scientific">Alcelaphine herpesvirus 1 (strain C500)</name>
    <name type="common">AlHV-1</name>
    <name type="synonym">Malignant catarrhal fever virus</name>
    <dbReference type="NCBI Taxonomy" id="654901"/>
    <lineage>
        <taxon>Viruses</taxon>
        <taxon>Duplodnaviria</taxon>
        <taxon>Heunggongvirae</taxon>
        <taxon>Peploviricota</taxon>
        <taxon>Herviviricetes</taxon>
        <taxon>Herpesvirales</taxon>
        <taxon>Orthoherpesviridae</taxon>
        <taxon>Gammaherpesvirinae</taxon>
        <taxon>Macavirus</taxon>
        <taxon>Macavirus alcelaphinegamma1</taxon>
    </lineage>
</organism>
<comment type="function">
    <text evidence="1">Increases the processivity of the viral polymerase, probably by acting as a sliding clamp that prevents dissociation of the polymerase from the active template.</text>
</comment>
<comment type="similarity">
    <text evidence="3">Belongs to the herpesviridae DNA polymerase accessory subunit family.</text>
</comment>
<feature type="chain" id="PRO_0000405738" description="DNA polymerase processivity factor">
    <location>
        <begin position="1"/>
        <end position="411"/>
    </location>
</feature>
<feature type="region of interest" description="Disordered" evidence="2">
    <location>
        <begin position="296"/>
        <end position="411"/>
    </location>
</feature>
<feature type="compositionally biased region" description="Low complexity" evidence="2">
    <location>
        <begin position="304"/>
        <end position="318"/>
    </location>
</feature>
<feature type="compositionally biased region" description="Acidic residues" evidence="2">
    <location>
        <begin position="345"/>
        <end position="358"/>
    </location>
</feature>
<evidence type="ECO:0000250" key="1"/>
<evidence type="ECO:0000256" key="2">
    <source>
        <dbReference type="SAM" id="MobiDB-lite"/>
    </source>
</evidence>
<evidence type="ECO:0000305" key="3"/>
<sequence>METCASFRLSPALLTSSTKIYDHVKSHLKSAMIQFSDLNTTPVMSIISNMGSAGIVTFQLTGAVSDTETLAEITEPLAFRNHSFGGTYLHSREFFGKEIEDILVRFYKRASTASKLPEFVETKITYNNSITETRHTSTVDSHVSPVEKYLQKCFVKAKLILSIKTCTMLQKWLRQNKNKSPVARLHINETLTVLVVTVGDECTTIEFKSFVLEPADAFLTLDKPGNFGAVLVDCTAVVNLECLIQAIGICKVPSVCVPAFKFYSGGIVEVSSAHLKQSKSPSATVSTVLLDASESLKQPAEQEQPTTSQPSDPQSSNSVDKPSPPRPSISQPVRRRAPPRAIISDSEEDSDSDSDQDCSTETQPETSYREEPKKFTPKPTAPPNKRKQFEPLKCPVEKKKKSNSNSFVSII</sequence>
<gene>
    <name type="primary">59</name>
</gene>
<dbReference type="EMBL" id="AF005370">
    <property type="protein sequence ID" value="AAC58106.1"/>
    <property type="molecule type" value="Genomic_DNA"/>
</dbReference>
<dbReference type="PIR" id="T03154">
    <property type="entry name" value="T03154"/>
</dbReference>
<dbReference type="RefSeq" id="NP_065558.1">
    <property type="nucleotide sequence ID" value="NC_002531.1"/>
</dbReference>
<dbReference type="SMR" id="O36409"/>
<dbReference type="KEGG" id="vg:911783"/>
<dbReference type="Proteomes" id="UP000000941">
    <property type="component" value="Segment"/>
</dbReference>
<dbReference type="GO" id="GO:0006260">
    <property type="term" value="P:DNA replication"/>
    <property type="evidence" value="ECO:0007669"/>
    <property type="project" value="UniProtKB-KW"/>
</dbReference>
<dbReference type="Gene3D" id="3.70.10.10">
    <property type="match status" value="1"/>
</dbReference>
<dbReference type="InterPro" id="IPR007013">
    <property type="entry name" value="DNA_pol_proc_fac_herpes"/>
</dbReference>
<dbReference type="Pfam" id="PF04929">
    <property type="entry name" value="Herpes_DNAp_acc"/>
    <property type="match status" value="1"/>
</dbReference>
<accession>O36409</accession>
<proteinExistence type="inferred from homology"/>
<reference key="1">
    <citation type="journal article" date="1997" name="J. Virol.">
        <title>Primary structure of the alcelaphine herpesvirus 1 genome.</title>
        <authorList>
            <person name="Ensser A."/>
            <person name="Pflanz R."/>
            <person name="Fleckenstein B."/>
        </authorList>
    </citation>
    <scope>NUCLEOTIDE SEQUENCE [LARGE SCALE GENOMIC DNA]</scope>
</reference>
<organismHost>
    <name type="scientific">Connochaetes taurinus</name>
    <name type="common">Blue wildebeest</name>
    <dbReference type="NCBI Taxonomy" id="9927"/>
</organismHost>
<name>VG59_ALHV1</name>
<keyword id="KW-0235">DNA replication</keyword>
<keyword id="KW-1185">Reference proteome</keyword>
<protein>
    <recommendedName>
        <fullName>DNA polymerase processivity factor</fullName>
    </recommendedName>
</protein>